<organism>
    <name type="scientific">Histophilus somni (strain 129Pt)</name>
    <name type="common">Haemophilus somnus</name>
    <dbReference type="NCBI Taxonomy" id="205914"/>
    <lineage>
        <taxon>Bacteria</taxon>
        <taxon>Pseudomonadati</taxon>
        <taxon>Pseudomonadota</taxon>
        <taxon>Gammaproteobacteria</taxon>
        <taxon>Pasteurellales</taxon>
        <taxon>Pasteurellaceae</taxon>
        <taxon>Histophilus</taxon>
    </lineage>
</organism>
<keyword id="KW-0004">4Fe-4S</keyword>
<keyword id="KW-1015">Disulfide bond</keyword>
<keyword id="KW-0408">Iron</keyword>
<keyword id="KW-0411">Iron-sulfur</keyword>
<keyword id="KW-0479">Metal-binding</keyword>
<keyword id="KW-0560">Oxidoreductase</keyword>
<keyword id="KW-0671">Queuosine biosynthesis</keyword>
<keyword id="KW-0676">Redox-active center</keyword>
<keyword id="KW-0819">tRNA processing</keyword>
<accession>Q0I1Q0</accession>
<dbReference type="EC" id="1.17.99.6" evidence="1 6"/>
<dbReference type="EMBL" id="CP000436">
    <property type="protein sequence ID" value="ABI24521.1"/>
    <property type="molecule type" value="Genomic_DNA"/>
</dbReference>
<dbReference type="SMR" id="Q0I1Q0"/>
<dbReference type="KEGG" id="hso:HS_0243"/>
<dbReference type="eggNOG" id="COG1636">
    <property type="taxonomic scope" value="Bacteria"/>
</dbReference>
<dbReference type="HOGENOM" id="CLU_088177_0_0_6"/>
<dbReference type="UniPathway" id="UPA00392"/>
<dbReference type="GO" id="GO:0051539">
    <property type="term" value="F:4 iron, 4 sulfur cluster binding"/>
    <property type="evidence" value="ECO:0007669"/>
    <property type="project" value="UniProtKB-UniRule"/>
</dbReference>
<dbReference type="GO" id="GO:0052693">
    <property type="term" value="F:epoxyqueuosine reductase activity"/>
    <property type="evidence" value="ECO:0007669"/>
    <property type="project" value="UniProtKB-UniRule"/>
</dbReference>
<dbReference type="GO" id="GO:0046872">
    <property type="term" value="F:metal ion binding"/>
    <property type="evidence" value="ECO:0007669"/>
    <property type="project" value="UniProtKB-KW"/>
</dbReference>
<dbReference type="GO" id="GO:0008616">
    <property type="term" value="P:queuosine biosynthetic process"/>
    <property type="evidence" value="ECO:0007669"/>
    <property type="project" value="UniProtKB-UniRule"/>
</dbReference>
<dbReference type="GO" id="GO:0006400">
    <property type="term" value="P:tRNA modification"/>
    <property type="evidence" value="ECO:0007669"/>
    <property type="project" value="UniProtKB-UniRule"/>
</dbReference>
<dbReference type="HAMAP" id="MF_02089">
    <property type="entry name" value="QueH"/>
    <property type="match status" value="1"/>
</dbReference>
<dbReference type="InterPro" id="IPR003828">
    <property type="entry name" value="QueH"/>
</dbReference>
<dbReference type="PANTHER" id="PTHR36701">
    <property type="entry name" value="EPOXYQUEUOSINE REDUCTASE QUEH"/>
    <property type="match status" value="1"/>
</dbReference>
<dbReference type="PANTHER" id="PTHR36701:SF1">
    <property type="entry name" value="EPOXYQUEUOSINE REDUCTASE QUEH"/>
    <property type="match status" value="1"/>
</dbReference>
<dbReference type="Pfam" id="PF02677">
    <property type="entry name" value="QueH"/>
    <property type="match status" value="1"/>
</dbReference>
<protein>
    <recommendedName>
        <fullName evidence="1 4">Epoxyqueuosine reductase QueH</fullName>
        <ecNumber evidence="1 6">1.17.99.6</ecNumber>
    </recommendedName>
    <alternativeName>
        <fullName evidence="1 5">Queuosine biosynthesis protein QueH</fullName>
    </alternativeName>
</protein>
<proteinExistence type="evidence at protein level"/>
<reference key="1">
    <citation type="journal article" date="2007" name="J. Bacteriol.">
        <title>Complete genome sequence of Haemophilus somnus (Histophilus somni) strain 129Pt and comparison to Haemophilus ducreyi 35000HP and Haemophilus influenzae Rd.</title>
        <authorList>
            <person name="Challacombe J.F."/>
            <person name="Duncan A.J."/>
            <person name="Brettin T.S."/>
            <person name="Bruce D."/>
            <person name="Chertkov O."/>
            <person name="Detter J.C."/>
            <person name="Han C.S."/>
            <person name="Misra M."/>
            <person name="Richardson P."/>
            <person name="Tapia R."/>
            <person name="Thayer N."/>
            <person name="Xie G."/>
            <person name="Inzana T.J."/>
        </authorList>
    </citation>
    <scope>NUCLEOTIDE SEQUENCE [LARGE SCALE GENOMIC DNA]</scope>
    <source>
        <strain>129Pt</strain>
    </source>
</reference>
<reference key="2">
    <citation type="journal article" date="2017" name="ACS Chem. Biol.">
        <title>Identification of a novel epoxyqueuosine reductase family by comparative genomics.</title>
        <authorList>
            <person name="Zallot R."/>
            <person name="Ross R."/>
            <person name="Chen W.H."/>
            <person name="Bruner S.D."/>
            <person name="Limbach P.A."/>
            <person name="de Crecy-Lagard V."/>
        </authorList>
    </citation>
    <scope>FUNCTION</scope>
    <scope>CATALYTIC ACTIVITY</scope>
    <scope>PATHWAY</scope>
    <source>
        <strain>129Pt</strain>
    </source>
</reference>
<feature type="chain" id="PRO_0000439901" description="Epoxyqueuosine reductase QueH">
    <location>
        <begin position="1"/>
        <end position="243"/>
    </location>
</feature>
<feature type="region of interest" description="Disordered" evidence="2">
    <location>
        <begin position="1"/>
        <end position="30"/>
    </location>
</feature>
<feature type="compositionally biased region" description="Basic and acidic residues" evidence="2">
    <location>
        <begin position="1"/>
        <end position="16"/>
    </location>
</feature>
<feature type="binding site" evidence="1">
    <location>
        <position position="49"/>
    </location>
    <ligand>
        <name>[4Fe-4S] cluster</name>
        <dbReference type="ChEBI" id="CHEBI:49883"/>
    </ligand>
</feature>
<feature type="binding site" evidence="1">
    <location>
        <position position="50"/>
    </location>
    <ligand>
        <name>[4Fe-4S] cluster</name>
        <dbReference type="ChEBI" id="CHEBI:49883"/>
    </ligand>
</feature>
<feature type="binding site" evidence="1">
    <location>
        <position position="128"/>
    </location>
    <ligand>
        <name>[4Fe-4S] cluster</name>
        <dbReference type="ChEBI" id="CHEBI:49883"/>
    </ligand>
</feature>
<feature type="binding site" evidence="1">
    <location>
        <position position="131"/>
    </location>
    <ligand>
        <name>[4Fe-4S] cluster</name>
        <dbReference type="ChEBI" id="CHEBI:49883"/>
    </ligand>
</feature>
<feature type="disulfide bond" description="Redox-active" evidence="1">
    <location>
        <begin position="211"/>
        <end position="213"/>
    </location>
</feature>
<name>QUEH_HISS1</name>
<comment type="function">
    <text evidence="1 3">Catalyzes the conversion of epoxyqueuosine (oQ) to queuosine (Q), which is a hypermodified base found in the wobble positions of tRNA(Asp), tRNA(Asn), tRNA(His) and tRNA(Tyr).</text>
</comment>
<comment type="catalytic activity">
    <reaction evidence="1 6">
        <text>epoxyqueuosine(34) in tRNA + AH2 = queuosine(34) in tRNA + A + H2O</text>
        <dbReference type="Rhea" id="RHEA:32159"/>
        <dbReference type="Rhea" id="RHEA-COMP:18571"/>
        <dbReference type="Rhea" id="RHEA-COMP:18582"/>
        <dbReference type="ChEBI" id="CHEBI:13193"/>
        <dbReference type="ChEBI" id="CHEBI:15377"/>
        <dbReference type="ChEBI" id="CHEBI:17499"/>
        <dbReference type="ChEBI" id="CHEBI:194431"/>
        <dbReference type="ChEBI" id="CHEBI:194443"/>
        <dbReference type="EC" id="1.17.99.6"/>
    </reaction>
</comment>
<comment type="pathway">
    <text evidence="1 6">tRNA modification; tRNA-queuosine biosynthesis.</text>
</comment>
<comment type="similarity">
    <text evidence="1 5">Belongs to the QueH family.</text>
</comment>
<gene>
    <name evidence="1 4" type="primary">queH</name>
    <name evidence="7" type="ordered locus">HS_0243</name>
</gene>
<evidence type="ECO:0000255" key="1">
    <source>
        <dbReference type="HAMAP-Rule" id="MF_02089"/>
    </source>
</evidence>
<evidence type="ECO:0000256" key="2">
    <source>
        <dbReference type="SAM" id="MobiDB-lite"/>
    </source>
</evidence>
<evidence type="ECO:0000269" key="3">
    <source>
    </source>
</evidence>
<evidence type="ECO:0000303" key="4">
    <source>
    </source>
</evidence>
<evidence type="ECO:0000305" key="5"/>
<evidence type="ECO:0000305" key="6">
    <source>
    </source>
</evidence>
<evidence type="ECO:0000312" key="7">
    <source>
        <dbReference type="EMBL" id="ABI24521.1"/>
    </source>
</evidence>
<sequence length="243" mass="28874">MHRTKLEQKQPHFDAQKRRKKECKNSNTPFVRPKLELPHGHNKLLLHSCCAPCSGEVMEAIHASGIDFTIYFYNPNIHPLKEYLIRKEENIRFAEKWGIPFIDADYDRQNWFDRAKGMEDEPERGIRCTMCFDMRFEKAAQYAHENGFPVFTSCLGISRWKDMNQINGCGHRAAEKYDDVVYWDYNWRKGGGSQRMIEISKRERFYQQEYCGCVYSLRDTNKWREANGRQKIEIGKLYYSADK</sequence>